<sequence>MPTIKQLIRNTRQPIRNVTKSPALGGCPQRRGTCTRVYTITPKKPNSALRKVARVRLTSGFEITAYIPGIGHNSQEHSVVLVRGGRVKDLPGVRYHIVRGTLDAVGVKDRQQGRSQYGVKKPK</sequence>
<accession>A4GYT5</accession>
<comment type="function">
    <text evidence="1">With S4 and S5 plays an important role in translational accuracy. Located at the interface of the 30S and 50S subunits (By similarity).</text>
</comment>
<comment type="subunit">
    <text evidence="1">Part of the 30S ribosomal subunit.</text>
</comment>
<comment type="subcellular location">
    <subcellularLocation>
        <location>Plastid</location>
        <location>Chloroplast</location>
    </subcellularLocation>
</comment>
<comment type="similarity">
    <text evidence="3">Belongs to the universal ribosomal protein uS12 family.</text>
</comment>
<comment type="caution">
    <text evidence="3">There is 1 gene for this protein in each of the chloroplast inverted repeats; while they are usually identical, in this organism they are not. The other copy is AC A4GYN8.</text>
</comment>
<reference key="1">
    <citation type="journal article" date="2006" name="Science">
        <title>The genome of black cottonwood, Populus trichocarpa (Torr. &amp; Gray).</title>
        <authorList>
            <person name="Tuskan G.A."/>
            <person name="Difazio S."/>
            <person name="Jansson S."/>
            <person name="Bohlmann J."/>
            <person name="Grigoriev I."/>
            <person name="Hellsten U."/>
            <person name="Putnam N."/>
            <person name="Ralph S."/>
            <person name="Rombauts S."/>
            <person name="Salamov A."/>
            <person name="Schein J."/>
            <person name="Sterck L."/>
            <person name="Aerts A."/>
            <person name="Bhalerao R.R."/>
            <person name="Bhalerao R.P."/>
            <person name="Blaudez D."/>
            <person name="Boerjan W."/>
            <person name="Brun A."/>
            <person name="Brunner A."/>
            <person name="Busov V."/>
            <person name="Campbell M."/>
            <person name="Carlson J."/>
            <person name="Chalot M."/>
            <person name="Chapman J."/>
            <person name="Chen G.-L."/>
            <person name="Cooper D."/>
            <person name="Coutinho P.M."/>
            <person name="Couturier J."/>
            <person name="Covert S."/>
            <person name="Cronk Q."/>
            <person name="Cunningham R."/>
            <person name="Davis J."/>
            <person name="Degroeve S."/>
            <person name="Dejardin A."/>
            <person name="dePamphilis C.W."/>
            <person name="Detter J."/>
            <person name="Dirks B."/>
            <person name="Dubchak I."/>
            <person name="Duplessis S."/>
            <person name="Ehlting J."/>
            <person name="Ellis B."/>
            <person name="Gendler K."/>
            <person name="Goodstein D."/>
            <person name="Gribskov M."/>
            <person name="Grimwood J."/>
            <person name="Groover A."/>
            <person name="Gunter L."/>
            <person name="Hamberger B."/>
            <person name="Heinze B."/>
            <person name="Helariutta Y."/>
            <person name="Henrissat B."/>
            <person name="Holligan D."/>
            <person name="Holt R."/>
            <person name="Huang W."/>
            <person name="Islam-Faridi N."/>
            <person name="Jones S."/>
            <person name="Jones-Rhoades M."/>
            <person name="Jorgensen R."/>
            <person name="Joshi C."/>
            <person name="Kangasjaervi J."/>
            <person name="Karlsson J."/>
            <person name="Kelleher C."/>
            <person name="Kirkpatrick R."/>
            <person name="Kirst M."/>
            <person name="Kohler A."/>
            <person name="Kalluri U."/>
            <person name="Larimer F."/>
            <person name="Leebens-Mack J."/>
            <person name="Leple J.-C."/>
            <person name="Locascio P."/>
            <person name="Lou Y."/>
            <person name="Lucas S."/>
            <person name="Martin F."/>
            <person name="Montanini B."/>
            <person name="Napoli C."/>
            <person name="Nelson D.R."/>
            <person name="Nelson C."/>
            <person name="Nieminen K."/>
            <person name="Nilsson O."/>
            <person name="Pereda V."/>
            <person name="Peter G."/>
            <person name="Philippe R."/>
            <person name="Pilate G."/>
            <person name="Poliakov A."/>
            <person name="Razumovskaya J."/>
            <person name="Richardson P."/>
            <person name="Rinaldi C."/>
            <person name="Ritland K."/>
            <person name="Rouze P."/>
            <person name="Ryaboy D."/>
            <person name="Schmutz J."/>
            <person name="Schrader J."/>
            <person name="Segerman B."/>
            <person name="Shin H."/>
            <person name="Siddiqui A."/>
            <person name="Sterky F."/>
            <person name="Terry A."/>
            <person name="Tsai C.-J."/>
            <person name="Uberbacher E."/>
            <person name="Unneberg P."/>
            <person name="Vahala J."/>
            <person name="Wall K."/>
            <person name="Wessler S."/>
            <person name="Yang G."/>
            <person name="Yin T."/>
            <person name="Douglas C."/>
            <person name="Marra M."/>
            <person name="Sandberg G."/>
            <person name="Van de Peer Y."/>
            <person name="Rokhsar D.S."/>
        </authorList>
    </citation>
    <scope>NUCLEOTIDE SEQUENCE [LARGE SCALE GENOMIC DNA]</scope>
    <source>
        <strain>cv. Nisqually</strain>
    </source>
</reference>
<gene>
    <name type="primary">rps12-A</name>
    <name type="ordered locus">Poptr_cp091</name>
</gene>
<organism>
    <name type="scientific">Populus trichocarpa</name>
    <name type="common">Western balsam poplar</name>
    <name type="synonym">Populus balsamifera subsp. trichocarpa</name>
    <dbReference type="NCBI Taxonomy" id="3694"/>
    <lineage>
        <taxon>Eukaryota</taxon>
        <taxon>Viridiplantae</taxon>
        <taxon>Streptophyta</taxon>
        <taxon>Embryophyta</taxon>
        <taxon>Tracheophyta</taxon>
        <taxon>Spermatophyta</taxon>
        <taxon>Magnoliopsida</taxon>
        <taxon>eudicotyledons</taxon>
        <taxon>Gunneridae</taxon>
        <taxon>Pentapetalae</taxon>
        <taxon>rosids</taxon>
        <taxon>fabids</taxon>
        <taxon>Malpighiales</taxon>
        <taxon>Salicaceae</taxon>
        <taxon>Saliceae</taxon>
        <taxon>Populus</taxon>
    </lineage>
</organism>
<evidence type="ECO:0000250" key="1"/>
<evidence type="ECO:0000255" key="2">
    <source>
        <dbReference type="HAMAP-Rule" id="MF_00403"/>
    </source>
</evidence>
<evidence type="ECO:0000305" key="3"/>
<name>RR12A_POPTR</name>
<protein>
    <recommendedName>
        <fullName evidence="2">Small ribosomal subunit protein uS12cz</fullName>
    </recommendedName>
    <alternativeName>
        <fullName evidence="3">30S ribosomal protein S12-A, chloroplastic</fullName>
    </alternativeName>
</protein>
<geneLocation type="chloroplast"/>
<proteinExistence type="inferred from homology"/>
<dbReference type="EMBL" id="EF489041">
    <property type="protein sequence ID" value="ABO36730.1"/>
    <property type="molecule type" value="Genomic_DNA"/>
</dbReference>
<dbReference type="SMR" id="A4GYT5"/>
<dbReference type="FunCoup" id="A4GYT5">
    <property type="interactions" value="2329"/>
</dbReference>
<dbReference type="STRING" id="3694.A4GYT5"/>
<dbReference type="KEGG" id="pop:4929628"/>
<dbReference type="KEGG" id="pop:4929696"/>
<dbReference type="InParanoid" id="A4GYT5"/>
<dbReference type="OrthoDB" id="810451at2759"/>
<dbReference type="Proteomes" id="UP000006729">
    <property type="component" value="Chloroplast"/>
</dbReference>
<dbReference type="ExpressionAtlas" id="A4GYT5">
    <property type="expression patterns" value="baseline"/>
</dbReference>
<dbReference type="GO" id="GO:0009507">
    <property type="term" value="C:chloroplast"/>
    <property type="evidence" value="ECO:0007669"/>
    <property type="project" value="UniProtKB-SubCell"/>
</dbReference>
<dbReference type="GO" id="GO:0005840">
    <property type="term" value="C:ribosome"/>
    <property type="evidence" value="ECO:0000318"/>
    <property type="project" value="GO_Central"/>
</dbReference>
<dbReference type="GO" id="GO:0015935">
    <property type="term" value="C:small ribosomal subunit"/>
    <property type="evidence" value="ECO:0007669"/>
    <property type="project" value="InterPro"/>
</dbReference>
<dbReference type="GO" id="GO:0019843">
    <property type="term" value="F:rRNA binding"/>
    <property type="evidence" value="ECO:0007669"/>
    <property type="project" value="UniProtKB-UniRule"/>
</dbReference>
<dbReference type="GO" id="GO:0003735">
    <property type="term" value="F:structural constituent of ribosome"/>
    <property type="evidence" value="ECO:0000318"/>
    <property type="project" value="GO_Central"/>
</dbReference>
<dbReference type="GO" id="GO:0006412">
    <property type="term" value="P:translation"/>
    <property type="evidence" value="ECO:0000318"/>
    <property type="project" value="GO_Central"/>
</dbReference>
<dbReference type="CDD" id="cd03368">
    <property type="entry name" value="Ribosomal_S12"/>
    <property type="match status" value="1"/>
</dbReference>
<dbReference type="FunFam" id="2.40.50.140:FF:000008">
    <property type="entry name" value="30S ribosomal protein S12, chloroplastic"/>
    <property type="match status" value="1"/>
</dbReference>
<dbReference type="Gene3D" id="2.40.50.140">
    <property type="entry name" value="Nucleic acid-binding proteins"/>
    <property type="match status" value="1"/>
</dbReference>
<dbReference type="HAMAP" id="MF_00403_B">
    <property type="entry name" value="Ribosomal_uS12_B"/>
    <property type="match status" value="1"/>
</dbReference>
<dbReference type="InterPro" id="IPR012340">
    <property type="entry name" value="NA-bd_OB-fold"/>
</dbReference>
<dbReference type="InterPro" id="IPR006032">
    <property type="entry name" value="Ribosomal_uS12"/>
</dbReference>
<dbReference type="InterPro" id="IPR005679">
    <property type="entry name" value="Ribosomal_uS12_bac"/>
</dbReference>
<dbReference type="NCBIfam" id="TIGR00981">
    <property type="entry name" value="rpsL_bact"/>
    <property type="match status" value="1"/>
</dbReference>
<dbReference type="PANTHER" id="PTHR11652">
    <property type="entry name" value="30S RIBOSOMAL PROTEIN S12 FAMILY MEMBER"/>
    <property type="match status" value="1"/>
</dbReference>
<dbReference type="Pfam" id="PF00164">
    <property type="entry name" value="Ribosom_S12_S23"/>
    <property type="match status" value="1"/>
</dbReference>
<dbReference type="PIRSF" id="PIRSF002133">
    <property type="entry name" value="Ribosomal_S12/S23"/>
    <property type="match status" value="1"/>
</dbReference>
<dbReference type="PRINTS" id="PR01034">
    <property type="entry name" value="RIBOSOMALS12"/>
</dbReference>
<dbReference type="SUPFAM" id="SSF50249">
    <property type="entry name" value="Nucleic acid-binding proteins"/>
    <property type="match status" value="1"/>
</dbReference>
<dbReference type="PROSITE" id="PS00055">
    <property type="entry name" value="RIBOSOMAL_S12"/>
    <property type="match status" value="1"/>
</dbReference>
<keyword id="KW-0150">Chloroplast</keyword>
<keyword id="KW-0934">Plastid</keyword>
<keyword id="KW-1185">Reference proteome</keyword>
<keyword id="KW-0687">Ribonucleoprotein</keyword>
<keyword id="KW-0689">Ribosomal protein</keyword>
<keyword id="KW-0694">RNA-binding</keyword>
<keyword id="KW-0699">rRNA-binding</keyword>
<feature type="chain" id="PRO_0000296078" description="Small ribosomal subunit protein uS12cz">
    <location>
        <begin position="1"/>
        <end position="123"/>
    </location>
</feature>